<proteinExistence type="inferred from homology"/>
<organism>
    <name type="scientific">Hypoxylon pulicicidum</name>
    <dbReference type="NCBI Taxonomy" id="1243767"/>
    <lineage>
        <taxon>Eukaryota</taxon>
        <taxon>Fungi</taxon>
        <taxon>Dikarya</taxon>
        <taxon>Ascomycota</taxon>
        <taxon>Pezizomycotina</taxon>
        <taxon>Sordariomycetes</taxon>
        <taxon>Xylariomycetidae</taxon>
        <taxon>Xylariales</taxon>
        <taxon>Hypoxylaceae</taxon>
        <taxon>Hypoxylon</taxon>
    </lineage>
</organism>
<accession>A0A2I6PIZ9</accession>
<protein>
    <recommendedName>
        <fullName evidence="5">Cytochrome P450 monooxygenase nodZ</fullName>
        <ecNumber evidence="7">1.-.-.-</ecNumber>
    </recommendedName>
    <alternativeName>
        <fullName evidence="5">Nodulisporic acid biosynthesis cluster protein Z</fullName>
    </alternativeName>
</protein>
<feature type="chain" id="PRO_0000446582" description="Cytochrome P450 monooxygenase nodZ">
    <location>
        <begin position="1"/>
        <end position="507"/>
    </location>
</feature>
<feature type="transmembrane region" description="Helical" evidence="2">
    <location>
        <begin position="1"/>
        <end position="21"/>
    </location>
</feature>
<feature type="transmembrane region" description="Helical" evidence="2">
    <location>
        <begin position="205"/>
        <end position="225"/>
    </location>
</feature>
<feature type="binding site" description="axial binding residue" evidence="1">
    <location>
        <position position="445"/>
    </location>
    <ligand>
        <name>heme</name>
        <dbReference type="ChEBI" id="CHEBI:30413"/>
    </ligand>
    <ligandPart>
        <name>Fe</name>
        <dbReference type="ChEBI" id="CHEBI:18248"/>
    </ligandPart>
</feature>
<feature type="glycosylation site" description="N-linked (GlcNAc...) asparagine" evidence="3">
    <location>
        <position position="352"/>
    </location>
</feature>
<name>NODZ_HYPPI</name>
<comment type="function">
    <text evidence="4 7">Cytochrome P450 monooxygenase; part of the gene cluster that mediates the biosynthesis of the indole diterpenes nodulisporic acids (NA). Nodulisporic acid A (NAA) and its chemically modified derivatives are of particular significance because of their highly potent insecticidal activity against blood-feeding arthropods and lack of observable adverse effects on mammals, in particular the tremogenicity associated with the paspaline-derived IDTs is not observed (PubMed:29283570). The geranylgeranyl diphosphate (GGPP) synthase ggs1, localized outside of the cluster, is proposed to catalyze the first step in nodulisporic acid biosynthesis via conversion of farnesyl pyrophosphate and isopentyl pyrophosphate into geranylgeranyl pyrophosphate (GGPP) (PubMed:29283570). Condensation of indole-3-glycerol phosphate with GGPP by the prenyl transferase nodC then forms 3-geranylgeranylindole (3-GGI) (PubMed:29283570). Epoxidation by the FAD-dependent monooxygenase nodM leads to a single-epoxidized-GGI that is substrate of the terpene cyclase nodB for cyclization to yield emindole SB (PubMed:29283570). The terminal methyl carbon, C28, of emindole SB is then oxidized by the cytochrome P450 monooxygenase nodW to produce nodulisporic acid F (NAF), the pentacyclic core of NAA (PubMed:29283570). NAF is converted to nodulisporic acid E (NAE) via prenylation. This step is probably performed by one of the indole diterpene prenyltransferases nodD1 or nodD2 (Probable). Several oxidation steps performed by the FAD-linked oxidoreductase nodO and one of the cytochrome P450 monooxygenase nodR, nodX or nodZ further convert NAE to nodulisporic acid D (NAD) (Probable). NAD is substrate of cytochrome P450 monooxygenase nodJ to produce the precursor of nodulisporic acid C (NAC), converted to NAC by one of the indole diterpene prenyltransferases nodD1 or nodD2 (Probable). The FAD-dependent monooxygenase nodY2 then oxidizes NAC to nodulisporic acid B (NAB) (Probable). Finally NAB is converted to NAA by one of the cytochrome P450 monooxygenases nodR, nodX or nodZ (Probable).</text>
</comment>
<comment type="cofactor">
    <cofactor evidence="1">
        <name>heme</name>
        <dbReference type="ChEBI" id="CHEBI:30413"/>
    </cofactor>
</comment>
<comment type="pathway">
    <text evidence="7">Secondary metabolite biosynthesis.</text>
</comment>
<comment type="subcellular location">
    <subcellularLocation>
        <location evidence="2">Membrane</location>
        <topology evidence="2">Multi-pass membrane protein</topology>
    </subcellularLocation>
</comment>
<comment type="similarity">
    <text evidence="6">Belongs to the cytochrome P450 family.</text>
</comment>
<evidence type="ECO:0000250" key="1">
    <source>
        <dbReference type="UniProtKB" id="P04798"/>
    </source>
</evidence>
<evidence type="ECO:0000255" key="2"/>
<evidence type="ECO:0000255" key="3">
    <source>
        <dbReference type="PROSITE-ProRule" id="PRU00498"/>
    </source>
</evidence>
<evidence type="ECO:0000269" key="4">
    <source>
    </source>
</evidence>
<evidence type="ECO:0000303" key="5">
    <source>
    </source>
</evidence>
<evidence type="ECO:0000305" key="6"/>
<evidence type="ECO:0000305" key="7">
    <source>
    </source>
</evidence>
<sequence length="507" mass="58232">MITASTSVFGGLILAFIFSLLYKNKKTRIPAEIDRVRTGGFLAHIRAFGCRLGTRVDDIRNGYNKFNKNGKPFVIQDSTFIPQVVIPPQYLGWLKEQPEKALSAETVRLEQLGLRYLVPSSDPEMVHLLTDVVCRYLTRNFQRVQERLYEELHMSTDEIMGLEATEWRQICLHEAMETILRRMISCVLIGLPWCRDEECLKSWTGFLHCMAIAGTILGAVTPWFLRPLLGLLLKPPVGYMRRRSLRYLTPIFTERWKKIEKHEKSSLTTRELPDDFVTWCIQEVRNGAAEVTMLDLLSADPTIGYWEKLVEEATTAFRTDEDWIHAGTVSKLAYTDSAIRESLRRNPFSIRNVTREVIGKDGLTLPSGTRLPQGTWITTALANIHHDARFYSNPTEYQPFRFVARDAFHTEGKEGSEKVLQPSEAILTSTIDERLLTFGYGRRACPGRWFASHILKMLIAYITINYDIQPLTGPPKKVKFADFTVPSPSIKIIVRRKNLAYLRQRER</sequence>
<gene>
    <name evidence="5" type="primary">nodZ</name>
</gene>
<keyword id="KW-0325">Glycoprotein</keyword>
<keyword id="KW-0349">Heme</keyword>
<keyword id="KW-0408">Iron</keyword>
<keyword id="KW-0472">Membrane</keyword>
<keyword id="KW-0479">Metal-binding</keyword>
<keyword id="KW-0503">Monooxygenase</keyword>
<keyword id="KW-0560">Oxidoreductase</keyword>
<keyword id="KW-0812">Transmembrane</keyword>
<keyword id="KW-1133">Transmembrane helix</keyword>
<reference key="1">
    <citation type="journal article" date="2018" name="J. Am. Chem. Soc.">
        <title>Heterologous biosynthesis of nodulisporic acid F.</title>
        <authorList>
            <person name="Van de Bittner K.C."/>
            <person name="Nicholson M.J."/>
            <person name="Bustamante L.Y."/>
            <person name="Kessans S.A."/>
            <person name="Ram A."/>
            <person name="van Dolleweerd C.J."/>
            <person name="Scott B."/>
            <person name="Parker E.J."/>
        </authorList>
    </citation>
    <scope>NUCLEOTIDE SEQUENCE [GENOMIC DNA]</scope>
    <scope>IDENTIFICATION</scope>
    <scope>FUNCTION</scope>
    <scope>PATHWAY</scope>
    <source>
        <strain>MF5954 / ATCC 74245</strain>
    </source>
</reference>
<dbReference type="EC" id="1.-.-.-" evidence="7"/>
<dbReference type="EMBL" id="MG182145">
    <property type="protein sequence ID" value="AUM60058.1"/>
    <property type="molecule type" value="Genomic_DNA"/>
</dbReference>
<dbReference type="GlyCosmos" id="A0A2I6PIZ9">
    <property type="glycosylation" value="1 site, No reported glycans"/>
</dbReference>
<dbReference type="GO" id="GO:0016020">
    <property type="term" value="C:membrane"/>
    <property type="evidence" value="ECO:0007669"/>
    <property type="project" value="UniProtKB-SubCell"/>
</dbReference>
<dbReference type="GO" id="GO:0020037">
    <property type="term" value="F:heme binding"/>
    <property type="evidence" value="ECO:0007669"/>
    <property type="project" value="InterPro"/>
</dbReference>
<dbReference type="GO" id="GO:0005506">
    <property type="term" value="F:iron ion binding"/>
    <property type="evidence" value="ECO:0007669"/>
    <property type="project" value="InterPro"/>
</dbReference>
<dbReference type="GO" id="GO:0004497">
    <property type="term" value="F:monooxygenase activity"/>
    <property type="evidence" value="ECO:0007669"/>
    <property type="project" value="UniProtKB-KW"/>
</dbReference>
<dbReference type="GO" id="GO:0016705">
    <property type="term" value="F:oxidoreductase activity, acting on paired donors, with incorporation or reduction of molecular oxygen"/>
    <property type="evidence" value="ECO:0007669"/>
    <property type="project" value="InterPro"/>
</dbReference>
<dbReference type="GO" id="GO:0019748">
    <property type="term" value="P:secondary metabolic process"/>
    <property type="evidence" value="ECO:0007669"/>
    <property type="project" value="UniProtKB-ARBA"/>
</dbReference>
<dbReference type="CDD" id="cd11041">
    <property type="entry name" value="CYP503A1-like"/>
    <property type="match status" value="1"/>
</dbReference>
<dbReference type="Gene3D" id="1.10.630.10">
    <property type="entry name" value="Cytochrome P450"/>
    <property type="match status" value="1"/>
</dbReference>
<dbReference type="InterPro" id="IPR001128">
    <property type="entry name" value="Cyt_P450"/>
</dbReference>
<dbReference type="InterPro" id="IPR017972">
    <property type="entry name" value="Cyt_P450_CS"/>
</dbReference>
<dbReference type="InterPro" id="IPR002403">
    <property type="entry name" value="Cyt_P450_E_grp-IV"/>
</dbReference>
<dbReference type="InterPro" id="IPR036396">
    <property type="entry name" value="Cyt_P450_sf"/>
</dbReference>
<dbReference type="PANTHER" id="PTHR46206">
    <property type="entry name" value="CYTOCHROME P450"/>
    <property type="match status" value="1"/>
</dbReference>
<dbReference type="PANTHER" id="PTHR46206:SF1">
    <property type="entry name" value="P450, PUTATIVE (EUROFUNG)-RELATED"/>
    <property type="match status" value="1"/>
</dbReference>
<dbReference type="Pfam" id="PF00067">
    <property type="entry name" value="p450"/>
    <property type="match status" value="1"/>
</dbReference>
<dbReference type="PRINTS" id="PR00465">
    <property type="entry name" value="EP450IV"/>
</dbReference>
<dbReference type="SUPFAM" id="SSF48264">
    <property type="entry name" value="Cytochrome P450"/>
    <property type="match status" value="1"/>
</dbReference>
<dbReference type="PROSITE" id="PS00086">
    <property type="entry name" value="CYTOCHROME_P450"/>
    <property type="match status" value="1"/>
</dbReference>